<protein>
    <recommendedName>
        <fullName evidence="1">Phosphoenolpyruvate carboxykinase (ATP)</fullName>
        <shortName evidence="1">PCK</shortName>
        <shortName evidence="1">PEP carboxykinase</shortName>
        <shortName evidence="1">PEPCK</shortName>
        <ecNumber evidence="1">4.1.1.49</ecNumber>
    </recommendedName>
</protein>
<name>PCKA_NITSB</name>
<sequence>MEINDFDKLGIKDVKKVYYNPDYETLFQKELEQQEGVETTLGAVAVDTGIFTGRSPKDKYFVKQPPSEKYIAWGDINQPISKEIFDELFEKTKEYLSGKELYVMDAFAGASDDSKKAIRVVTEIAWQAHFVKNMFIRPTEEELQNFHPDFTLYVAANLKNDRYKEHGLNSDVFIIFNIEENIAIIGGTWYGGEIKKGIFSMMNYWLPLEGKLSMHCSANIGDKDDVALFFGLSGTGKTTLSADPNRRLIGDDEHGWDDNGVFNFEGGCYAKVIGLDPEKEPDIYAAIKRDALLENVVVKENGEVDFEDSSKTENTRVSYPIYHICKHKEDLQGPHPKNIIFLSADAFGVLPPVSKLTKEQAMYYFLSGYTAKVAGTERGITEPVATFSACFGEAFLPLHPTVYAKLLGEKIDKHGVNVYLVNTGWTGGPYGIGQRMSLPATRSCINAILNGSITQSEYEILPIFNLEIPTYVEGVDPAILNPRNTWEDKEAYDRQLEHLAKLFIDNFKRYEGYGNFDYSKAGPQL</sequence>
<keyword id="KW-0067">ATP-binding</keyword>
<keyword id="KW-0963">Cytoplasm</keyword>
<keyword id="KW-0210">Decarboxylase</keyword>
<keyword id="KW-0312">Gluconeogenesis</keyword>
<keyword id="KW-0456">Lyase</keyword>
<keyword id="KW-0464">Manganese</keyword>
<keyword id="KW-0479">Metal-binding</keyword>
<keyword id="KW-0547">Nucleotide-binding</keyword>
<keyword id="KW-1185">Reference proteome</keyword>
<reference key="1">
    <citation type="journal article" date="2007" name="Proc. Natl. Acad. Sci. U.S.A.">
        <title>Deep-sea vent epsilon-proteobacterial genomes provide insights into emergence of pathogens.</title>
        <authorList>
            <person name="Nakagawa S."/>
            <person name="Takaki Y."/>
            <person name="Shimamura S."/>
            <person name="Reysenbach A.-L."/>
            <person name="Takai K."/>
            <person name="Horikoshi K."/>
        </authorList>
    </citation>
    <scope>NUCLEOTIDE SEQUENCE [LARGE SCALE GENOMIC DNA]</scope>
    <source>
        <strain>SB155-2</strain>
    </source>
</reference>
<comment type="function">
    <text evidence="1">Involved in the gluconeogenesis. Catalyzes the conversion of oxaloacetate (OAA) to phosphoenolpyruvate (PEP) through direct phosphoryl transfer between the nucleoside triphosphate and OAA.</text>
</comment>
<comment type="catalytic activity">
    <reaction evidence="1">
        <text>oxaloacetate + ATP = phosphoenolpyruvate + ADP + CO2</text>
        <dbReference type="Rhea" id="RHEA:18617"/>
        <dbReference type="ChEBI" id="CHEBI:16452"/>
        <dbReference type="ChEBI" id="CHEBI:16526"/>
        <dbReference type="ChEBI" id="CHEBI:30616"/>
        <dbReference type="ChEBI" id="CHEBI:58702"/>
        <dbReference type="ChEBI" id="CHEBI:456216"/>
        <dbReference type="EC" id="4.1.1.49"/>
    </reaction>
</comment>
<comment type="cofactor">
    <cofactor evidence="1">
        <name>Mn(2+)</name>
        <dbReference type="ChEBI" id="CHEBI:29035"/>
    </cofactor>
    <text evidence="1">Binds 1 Mn(2+) ion per subunit.</text>
</comment>
<comment type="pathway">
    <text evidence="1">Carbohydrate biosynthesis; gluconeogenesis.</text>
</comment>
<comment type="subcellular location">
    <subcellularLocation>
        <location evidence="1">Cytoplasm</location>
    </subcellularLocation>
</comment>
<comment type="similarity">
    <text evidence="1">Belongs to the phosphoenolpyruvate carboxykinase (ATP) family.</text>
</comment>
<dbReference type="EC" id="4.1.1.49" evidence="1"/>
<dbReference type="EMBL" id="AP009178">
    <property type="protein sequence ID" value="BAF69161.1"/>
    <property type="molecule type" value="Genomic_DNA"/>
</dbReference>
<dbReference type="RefSeq" id="WP_011979587.1">
    <property type="nucleotide sequence ID" value="NC_009662.1"/>
</dbReference>
<dbReference type="SMR" id="A6Q102"/>
<dbReference type="FunCoup" id="A6Q102">
    <property type="interactions" value="286"/>
</dbReference>
<dbReference type="STRING" id="387092.NIS_0043"/>
<dbReference type="KEGG" id="nis:NIS_0043"/>
<dbReference type="eggNOG" id="COG1866">
    <property type="taxonomic scope" value="Bacteria"/>
</dbReference>
<dbReference type="HOGENOM" id="CLU_018247_0_1_7"/>
<dbReference type="InParanoid" id="A6Q102"/>
<dbReference type="OrthoDB" id="9806325at2"/>
<dbReference type="UniPathway" id="UPA00138"/>
<dbReference type="Proteomes" id="UP000001118">
    <property type="component" value="Chromosome"/>
</dbReference>
<dbReference type="GO" id="GO:0005829">
    <property type="term" value="C:cytosol"/>
    <property type="evidence" value="ECO:0007669"/>
    <property type="project" value="TreeGrafter"/>
</dbReference>
<dbReference type="GO" id="GO:0005524">
    <property type="term" value="F:ATP binding"/>
    <property type="evidence" value="ECO:0007669"/>
    <property type="project" value="UniProtKB-UniRule"/>
</dbReference>
<dbReference type="GO" id="GO:0046872">
    <property type="term" value="F:metal ion binding"/>
    <property type="evidence" value="ECO:0007669"/>
    <property type="project" value="UniProtKB-KW"/>
</dbReference>
<dbReference type="GO" id="GO:0004612">
    <property type="term" value="F:phosphoenolpyruvate carboxykinase (ATP) activity"/>
    <property type="evidence" value="ECO:0007669"/>
    <property type="project" value="UniProtKB-UniRule"/>
</dbReference>
<dbReference type="GO" id="GO:0006094">
    <property type="term" value="P:gluconeogenesis"/>
    <property type="evidence" value="ECO:0007669"/>
    <property type="project" value="UniProtKB-UniRule"/>
</dbReference>
<dbReference type="CDD" id="cd00484">
    <property type="entry name" value="PEPCK_ATP"/>
    <property type="match status" value="1"/>
</dbReference>
<dbReference type="FunFam" id="3.40.449.10:FF:000001">
    <property type="entry name" value="Phosphoenolpyruvate carboxykinase (ATP)"/>
    <property type="match status" value="1"/>
</dbReference>
<dbReference type="Gene3D" id="3.90.228.20">
    <property type="match status" value="1"/>
</dbReference>
<dbReference type="Gene3D" id="3.40.449.10">
    <property type="entry name" value="Phosphoenolpyruvate Carboxykinase, domain 1"/>
    <property type="match status" value="1"/>
</dbReference>
<dbReference type="Gene3D" id="2.170.8.10">
    <property type="entry name" value="Phosphoenolpyruvate Carboxykinase, domain 2"/>
    <property type="match status" value="1"/>
</dbReference>
<dbReference type="HAMAP" id="MF_00453">
    <property type="entry name" value="PEPCK_ATP"/>
    <property type="match status" value="1"/>
</dbReference>
<dbReference type="InterPro" id="IPR001272">
    <property type="entry name" value="PEP_carboxykinase_ATP"/>
</dbReference>
<dbReference type="InterPro" id="IPR013035">
    <property type="entry name" value="PEP_carboxykinase_C"/>
</dbReference>
<dbReference type="InterPro" id="IPR008210">
    <property type="entry name" value="PEP_carboxykinase_N"/>
</dbReference>
<dbReference type="InterPro" id="IPR015994">
    <property type="entry name" value="PEPCK_ATP_CS"/>
</dbReference>
<dbReference type="NCBIfam" id="TIGR00224">
    <property type="entry name" value="pckA"/>
    <property type="match status" value="1"/>
</dbReference>
<dbReference type="NCBIfam" id="NF006819">
    <property type="entry name" value="PRK09344.1-1"/>
    <property type="match status" value="1"/>
</dbReference>
<dbReference type="NCBIfam" id="NF006820">
    <property type="entry name" value="PRK09344.1-2"/>
    <property type="match status" value="1"/>
</dbReference>
<dbReference type="NCBIfam" id="NF006821">
    <property type="entry name" value="PRK09344.1-3"/>
    <property type="match status" value="1"/>
</dbReference>
<dbReference type="PANTHER" id="PTHR30031:SF0">
    <property type="entry name" value="PHOSPHOENOLPYRUVATE CARBOXYKINASE (ATP)"/>
    <property type="match status" value="1"/>
</dbReference>
<dbReference type="PANTHER" id="PTHR30031">
    <property type="entry name" value="PHOSPHOENOLPYRUVATE CARBOXYKINASE ATP"/>
    <property type="match status" value="1"/>
</dbReference>
<dbReference type="Pfam" id="PF01293">
    <property type="entry name" value="PEPCK_ATP"/>
    <property type="match status" value="1"/>
</dbReference>
<dbReference type="PIRSF" id="PIRSF006294">
    <property type="entry name" value="PEP_crbxkin"/>
    <property type="match status" value="1"/>
</dbReference>
<dbReference type="SUPFAM" id="SSF68923">
    <property type="entry name" value="PEP carboxykinase N-terminal domain"/>
    <property type="match status" value="1"/>
</dbReference>
<dbReference type="SUPFAM" id="SSF53795">
    <property type="entry name" value="PEP carboxykinase-like"/>
    <property type="match status" value="1"/>
</dbReference>
<dbReference type="PROSITE" id="PS00532">
    <property type="entry name" value="PEPCK_ATP"/>
    <property type="match status" value="1"/>
</dbReference>
<organism>
    <name type="scientific">Nitratiruptor sp. (strain SB155-2)</name>
    <dbReference type="NCBI Taxonomy" id="387092"/>
    <lineage>
        <taxon>Bacteria</taxon>
        <taxon>Pseudomonadati</taxon>
        <taxon>Campylobacterota</taxon>
        <taxon>Epsilonproteobacteria</taxon>
        <taxon>Nautiliales</taxon>
        <taxon>Nitratiruptoraceae</taxon>
        <taxon>Nitratiruptor</taxon>
    </lineage>
</organism>
<proteinExistence type="inferred from homology"/>
<feature type="chain" id="PRO_1000026333" description="Phosphoenolpyruvate carboxykinase (ATP)">
    <location>
        <begin position="1"/>
        <end position="525"/>
    </location>
</feature>
<feature type="binding site" evidence="1">
    <location>
        <position position="54"/>
    </location>
    <ligand>
        <name>substrate</name>
    </ligand>
</feature>
<feature type="binding site" evidence="1">
    <location>
        <position position="190"/>
    </location>
    <ligand>
        <name>substrate</name>
    </ligand>
</feature>
<feature type="binding site" evidence="1">
    <location>
        <position position="196"/>
    </location>
    <ligand>
        <name>ATP</name>
        <dbReference type="ChEBI" id="CHEBI:30616"/>
    </ligand>
</feature>
<feature type="binding site" evidence="1">
    <location>
        <position position="196"/>
    </location>
    <ligand>
        <name>Mn(2+)</name>
        <dbReference type="ChEBI" id="CHEBI:29035"/>
    </ligand>
</feature>
<feature type="binding site" evidence="1">
    <location>
        <position position="196"/>
    </location>
    <ligand>
        <name>substrate</name>
    </ligand>
</feature>
<feature type="binding site" evidence="1">
    <location>
        <position position="215"/>
    </location>
    <ligand>
        <name>ATP</name>
        <dbReference type="ChEBI" id="CHEBI:30616"/>
    </ligand>
</feature>
<feature type="binding site" evidence="1">
    <location>
        <position position="215"/>
    </location>
    <ligand>
        <name>Mn(2+)</name>
        <dbReference type="ChEBI" id="CHEBI:29035"/>
    </ligand>
</feature>
<feature type="binding site" evidence="1">
    <location>
        <begin position="231"/>
        <end position="239"/>
    </location>
    <ligand>
        <name>ATP</name>
        <dbReference type="ChEBI" id="CHEBI:30616"/>
    </ligand>
</feature>
<feature type="binding site" evidence="1">
    <location>
        <position position="252"/>
    </location>
    <ligand>
        <name>Mn(2+)</name>
        <dbReference type="ChEBI" id="CHEBI:29035"/>
    </ligand>
</feature>
<feature type="binding site" evidence="1">
    <location>
        <position position="280"/>
    </location>
    <ligand>
        <name>ATP</name>
        <dbReference type="ChEBI" id="CHEBI:30616"/>
    </ligand>
</feature>
<feature type="binding site" evidence="1">
    <location>
        <position position="316"/>
    </location>
    <ligand>
        <name>ATP</name>
        <dbReference type="ChEBI" id="CHEBI:30616"/>
    </ligand>
</feature>
<feature type="binding site" evidence="1">
    <location>
        <position position="316"/>
    </location>
    <ligand>
        <name>substrate</name>
    </ligand>
</feature>
<feature type="binding site" evidence="1">
    <location>
        <position position="441"/>
    </location>
    <ligand>
        <name>ATP</name>
        <dbReference type="ChEBI" id="CHEBI:30616"/>
    </ligand>
</feature>
<evidence type="ECO:0000255" key="1">
    <source>
        <dbReference type="HAMAP-Rule" id="MF_00453"/>
    </source>
</evidence>
<gene>
    <name evidence="1" type="primary">pckA</name>
    <name type="ordered locus">NIS_0043</name>
</gene>
<accession>A6Q102</accession>